<protein>
    <recommendedName>
        <fullName>RNA polymerase II transcriptional coactivator KIWI</fullName>
    </recommendedName>
</protein>
<keyword id="KW-0010">Activator</keyword>
<keyword id="KW-0025">Alternative splicing</keyword>
<keyword id="KW-0238">DNA-binding</keyword>
<keyword id="KW-0539">Nucleus</keyword>
<keyword id="KW-1185">Reference proteome</keyword>
<keyword id="KW-0804">Transcription</keyword>
<keyword id="KW-0805">Transcription regulation</keyword>
<sequence>MSSRGKRKDEDVRASDDESETHAPAKKVAKPADDSDQSDDIVVCNISKNRRVSVRNWNGKIWIDIREFYVKDGKTLPGKKGISLSVDQWNTLRNHAEDIEKALSDLS</sequence>
<feature type="chain" id="PRO_0000215947" description="RNA polymerase II transcriptional coactivator KIWI">
    <location>
        <begin position="1"/>
        <end position="107"/>
    </location>
</feature>
<feature type="region of interest" description="Disordered" evidence="2">
    <location>
        <begin position="1"/>
        <end position="40"/>
    </location>
</feature>
<feature type="compositionally biased region" description="Basic and acidic residues" evidence="2">
    <location>
        <begin position="7"/>
        <end position="23"/>
    </location>
</feature>
<name>KIWI_ARATH</name>
<dbReference type="EMBL" id="AF053302">
    <property type="protein sequence ID" value="AAC08574.1"/>
    <property type="molecule type" value="mRNA"/>
</dbReference>
<dbReference type="EMBL" id="AL391712">
    <property type="protein sequence ID" value="CAC05451.1"/>
    <property type="molecule type" value="Genomic_DNA"/>
</dbReference>
<dbReference type="EMBL" id="CP002688">
    <property type="protein sequence ID" value="AED91364.1"/>
    <property type="molecule type" value="Genomic_DNA"/>
</dbReference>
<dbReference type="EMBL" id="BT004745">
    <property type="protein sequence ID" value="AAO44011.1"/>
    <property type="molecule type" value="mRNA"/>
</dbReference>
<dbReference type="PIR" id="T52113">
    <property type="entry name" value="T52113"/>
</dbReference>
<dbReference type="RefSeq" id="NP_196487.1">
    <molecule id="O65154-1"/>
    <property type="nucleotide sequence ID" value="NM_120961.3"/>
</dbReference>
<dbReference type="SMR" id="O65154"/>
<dbReference type="BioGRID" id="16062">
    <property type="interactions" value="12"/>
</dbReference>
<dbReference type="FunCoup" id="O65154">
    <property type="interactions" value="2988"/>
</dbReference>
<dbReference type="IntAct" id="O65154">
    <property type="interactions" value="11"/>
</dbReference>
<dbReference type="STRING" id="3702.O65154"/>
<dbReference type="iPTMnet" id="O65154"/>
<dbReference type="PaxDb" id="3702-AT5G09250.1"/>
<dbReference type="ProteomicsDB" id="247166">
    <molecule id="O65154-1"/>
</dbReference>
<dbReference type="EnsemblPlants" id="AT5G09250.1">
    <molecule id="O65154-1"/>
    <property type="protein sequence ID" value="AT5G09250.1"/>
    <property type="gene ID" value="AT5G09250"/>
</dbReference>
<dbReference type="GeneID" id="830784"/>
<dbReference type="Gramene" id="AT5G09250.1">
    <molecule id="O65154-1"/>
    <property type="protein sequence ID" value="AT5G09250.1"/>
    <property type="gene ID" value="AT5G09250"/>
</dbReference>
<dbReference type="KEGG" id="ath:AT5G09250"/>
<dbReference type="Araport" id="AT5G09250"/>
<dbReference type="TAIR" id="AT5G09250">
    <property type="gene designation" value="KIWI"/>
</dbReference>
<dbReference type="eggNOG" id="KOG2712">
    <property type="taxonomic scope" value="Eukaryota"/>
</dbReference>
<dbReference type="HOGENOM" id="CLU_104273_1_3_1"/>
<dbReference type="InParanoid" id="O65154"/>
<dbReference type="OMA" id="TMDQWNV"/>
<dbReference type="OrthoDB" id="2505440at2759"/>
<dbReference type="PhylomeDB" id="O65154"/>
<dbReference type="PRO" id="PR:O65154"/>
<dbReference type="Proteomes" id="UP000006548">
    <property type="component" value="Chromosome 5"/>
</dbReference>
<dbReference type="ExpressionAtlas" id="O65154">
    <property type="expression patterns" value="baseline and differential"/>
</dbReference>
<dbReference type="GO" id="GO:0005634">
    <property type="term" value="C:nucleus"/>
    <property type="evidence" value="ECO:0007669"/>
    <property type="project" value="UniProtKB-SubCell"/>
</dbReference>
<dbReference type="GO" id="GO:0003677">
    <property type="term" value="F:DNA binding"/>
    <property type="evidence" value="ECO:0007669"/>
    <property type="project" value="UniProtKB-KW"/>
</dbReference>
<dbReference type="GO" id="GO:0003713">
    <property type="term" value="F:transcription coactivator activity"/>
    <property type="evidence" value="ECO:0007669"/>
    <property type="project" value="InterPro"/>
</dbReference>
<dbReference type="GO" id="GO:0060261">
    <property type="term" value="P:positive regulation of transcription initiation by RNA polymerase II"/>
    <property type="evidence" value="ECO:0007669"/>
    <property type="project" value="InterPro"/>
</dbReference>
<dbReference type="FunFam" id="2.30.31.10:FF:000005">
    <property type="entry name" value="Putative transcriptional co-activator"/>
    <property type="match status" value="1"/>
</dbReference>
<dbReference type="Gene3D" id="2.30.31.10">
    <property type="entry name" value="Transcriptional Coactivator Pc4, Chain A"/>
    <property type="match status" value="1"/>
</dbReference>
<dbReference type="InterPro" id="IPR003173">
    <property type="entry name" value="PC4_C"/>
</dbReference>
<dbReference type="InterPro" id="IPR009044">
    <property type="entry name" value="ssDNA-bd_transcriptional_reg"/>
</dbReference>
<dbReference type="InterPro" id="IPR045125">
    <property type="entry name" value="Sub1/Tcp4-like"/>
</dbReference>
<dbReference type="PANTHER" id="PTHR13215">
    <property type="entry name" value="RNA POLYMERASE II TRANSCRIPTIONAL COACTIVATOR"/>
    <property type="match status" value="1"/>
</dbReference>
<dbReference type="Pfam" id="PF02229">
    <property type="entry name" value="PC4"/>
    <property type="match status" value="1"/>
</dbReference>
<dbReference type="SUPFAM" id="SSF54447">
    <property type="entry name" value="ssDNA-binding transcriptional regulator domain"/>
    <property type="match status" value="1"/>
</dbReference>
<gene>
    <name type="primary">KIWI</name>
    <name type="ordered locus">At5g09250</name>
    <name type="ORF">T5E8_50</name>
</gene>
<accession>O65154</accession>
<organism>
    <name type="scientific">Arabidopsis thaliana</name>
    <name type="common">Mouse-ear cress</name>
    <dbReference type="NCBI Taxonomy" id="3702"/>
    <lineage>
        <taxon>Eukaryota</taxon>
        <taxon>Viridiplantae</taxon>
        <taxon>Streptophyta</taxon>
        <taxon>Embryophyta</taxon>
        <taxon>Tracheophyta</taxon>
        <taxon>Spermatophyta</taxon>
        <taxon>Magnoliopsida</taxon>
        <taxon>eudicotyledons</taxon>
        <taxon>Gunneridae</taxon>
        <taxon>Pentapetalae</taxon>
        <taxon>rosids</taxon>
        <taxon>malvids</taxon>
        <taxon>Brassicales</taxon>
        <taxon>Brassicaceae</taxon>
        <taxon>Camelineae</taxon>
        <taxon>Arabidopsis</taxon>
    </lineage>
</organism>
<proteinExistence type="evidence at protein level"/>
<evidence type="ECO:0000250" key="1"/>
<evidence type="ECO:0000256" key="2">
    <source>
        <dbReference type="SAM" id="MobiDB-lite"/>
    </source>
</evidence>
<evidence type="ECO:0000305" key="3"/>
<reference key="1">
    <citation type="journal article" date="1998" name="Plant J.">
        <title>Isolation of putative plant transcriptional coactivators using a modified two-hybrid system incorporating a GFP reporter gene.</title>
        <authorList>
            <person name="Cormack R.S."/>
            <person name="Hahlbrock K."/>
            <person name="Somssich I.E."/>
        </authorList>
    </citation>
    <scope>NUCLEOTIDE SEQUENCE [MRNA]</scope>
    <source>
        <strain>cv. Columbia</strain>
    </source>
</reference>
<reference key="2">
    <citation type="journal article" date="2000" name="Nature">
        <title>Sequence and analysis of chromosome 5 of the plant Arabidopsis thaliana.</title>
        <authorList>
            <person name="Tabata S."/>
            <person name="Kaneko T."/>
            <person name="Nakamura Y."/>
            <person name="Kotani H."/>
            <person name="Kato T."/>
            <person name="Asamizu E."/>
            <person name="Miyajima N."/>
            <person name="Sasamoto S."/>
            <person name="Kimura T."/>
            <person name="Hosouchi T."/>
            <person name="Kawashima K."/>
            <person name="Kohara M."/>
            <person name="Matsumoto M."/>
            <person name="Matsuno A."/>
            <person name="Muraki A."/>
            <person name="Nakayama S."/>
            <person name="Nakazaki N."/>
            <person name="Naruo K."/>
            <person name="Okumura S."/>
            <person name="Shinpo S."/>
            <person name="Takeuchi C."/>
            <person name="Wada T."/>
            <person name="Watanabe A."/>
            <person name="Yamada M."/>
            <person name="Yasuda M."/>
            <person name="Sato S."/>
            <person name="de la Bastide M."/>
            <person name="Huang E."/>
            <person name="Spiegel L."/>
            <person name="Gnoj L."/>
            <person name="O'Shaughnessy A."/>
            <person name="Preston R."/>
            <person name="Habermann K."/>
            <person name="Murray J."/>
            <person name="Johnson D."/>
            <person name="Rohlfing T."/>
            <person name="Nelson J."/>
            <person name="Stoneking T."/>
            <person name="Pepin K."/>
            <person name="Spieth J."/>
            <person name="Sekhon M."/>
            <person name="Armstrong J."/>
            <person name="Becker M."/>
            <person name="Belter E."/>
            <person name="Cordum H."/>
            <person name="Cordes M."/>
            <person name="Courtney L."/>
            <person name="Courtney W."/>
            <person name="Dante M."/>
            <person name="Du H."/>
            <person name="Edwards J."/>
            <person name="Fryman J."/>
            <person name="Haakensen B."/>
            <person name="Lamar E."/>
            <person name="Latreille P."/>
            <person name="Leonard S."/>
            <person name="Meyer R."/>
            <person name="Mulvaney E."/>
            <person name="Ozersky P."/>
            <person name="Riley A."/>
            <person name="Strowmatt C."/>
            <person name="Wagner-McPherson C."/>
            <person name="Wollam A."/>
            <person name="Yoakum M."/>
            <person name="Bell M."/>
            <person name="Dedhia N."/>
            <person name="Parnell L."/>
            <person name="Shah R."/>
            <person name="Rodriguez M."/>
            <person name="Hoon See L."/>
            <person name="Vil D."/>
            <person name="Baker J."/>
            <person name="Kirchoff K."/>
            <person name="Toth K."/>
            <person name="King L."/>
            <person name="Bahret A."/>
            <person name="Miller B."/>
            <person name="Marra M.A."/>
            <person name="Martienssen R."/>
            <person name="McCombie W.R."/>
            <person name="Wilson R.K."/>
            <person name="Murphy G."/>
            <person name="Bancroft I."/>
            <person name="Volckaert G."/>
            <person name="Wambutt R."/>
            <person name="Duesterhoeft A."/>
            <person name="Stiekema W."/>
            <person name="Pohl T."/>
            <person name="Entian K.-D."/>
            <person name="Terryn N."/>
            <person name="Hartley N."/>
            <person name="Bent E."/>
            <person name="Johnson S."/>
            <person name="Langham S.-A."/>
            <person name="McCullagh B."/>
            <person name="Robben J."/>
            <person name="Grymonprez B."/>
            <person name="Zimmermann W."/>
            <person name="Ramsperger U."/>
            <person name="Wedler H."/>
            <person name="Balke K."/>
            <person name="Wedler E."/>
            <person name="Peters S."/>
            <person name="van Staveren M."/>
            <person name="Dirkse W."/>
            <person name="Mooijman P."/>
            <person name="Klein Lankhorst R."/>
            <person name="Weitzenegger T."/>
            <person name="Bothe G."/>
            <person name="Rose M."/>
            <person name="Hauf J."/>
            <person name="Berneiser S."/>
            <person name="Hempel S."/>
            <person name="Feldpausch M."/>
            <person name="Lamberth S."/>
            <person name="Villarroel R."/>
            <person name="Gielen J."/>
            <person name="Ardiles W."/>
            <person name="Bents O."/>
            <person name="Lemcke K."/>
            <person name="Kolesov G."/>
            <person name="Mayer K.F.X."/>
            <person name="Rudd S."/>
            <person name="Schoof H."/>
            <person name="Schueller C."/>
            <person name="Zaccaria P."/>
            <person name="Mewes H.-W."/>
            <person name="Bevan M."/>
            <person name="Fransz P.F."/>
        </authorList>
    </citation>
    <scope>NUCLEOTIDE SEQUENCE [LARGE SCALE GENOMIC DNA]</scope>
    <source>
        <strain>cv. Columbia</strain>
    </source>
</reference>
<reference key="3">
    <citation type="journal article" date="2017" name="Plant J.">
        <title>Araport11: a complete reannotation of the Arabidopsis thaliana reference genome.</title>
        <authorList>
            <person name="Cheng C.Y."/>
            <person name="Krishnakumar V."/>
            <person name="Chan A.P."/>
            <person name="Thibaud-Nissen F."/>
            <person name="Schobel S."/>
            <person name="Town C.D."/>
        </authorList>
    </citation>
    <scope>GENOME REANNOTATION</scope>
    <source>
        <strain>cv. Columbia</strain>
    </source>
</reference>
<reference key="4">
    <citation type="journal article" date="2003" name="Science">
        <title>Empirical analysis of transcriptional activity in the Arabidopsis genome.</title>
        <authorList>
            <person name="Yamada K."/>
            <person name="Lim J."/>
            <person name="Dale J.M."/>
            <person name="Chen H."/>
            <person name="Shinn P."/>
            <person name="Palm C.J."/>
            <person name="Southwick A.M."/>
            <person name="Wu H.C."/>
            <person name="Kim C.J."/>
            <person name="Nguyen M."/>
            <person name="Pham P.K."/>
            <person name="Cheuk R.F."/>
            <person name="Karlin-Newmann G."/>
            <person name="Liu S.X."/>
            <person name="Lam B."/>
            <person name="Sakano H."/>
            <person name="Wu T."/>
            <person name="Yu G."/>
            <person name="Miranda M."/>
            <person name="Quach H.L."/>
            <person name="Tripp M."/>
            <person name="Chang C.H."/>
            <person name="Lee J.M."/>
            <person name="Toriumi M.J."/>
            <person name="Chan M.M."/>
            <person name="Tang C.C."/>
            <person name="Onodera C.S."/>
            <person name="Deng J.M."/>
            <person name="Akiyama K."/>
            <person name="Ansari Y."/>
            <person name="Arakawa T."/>
            <person name="Banh J."/>
            <person name="Banno F."/>
            <person name="Bowser L."/>
            <person name="Brooks S.Y."/>
            <person name="Carninci P."/>
            <person name="Chao Q."/>
            <person name="Choy N."/>
            <person name="Enju A."/>
            <person name="Goldsmith A.D."/>
            <person name="Gurjal M."/>
            <person name="Hansen N.F."/>
            <person name="Hayashizaki Y."/>
            <person name="Johnson-Hopson C."/>
            <person name="Hsuan V.W."/>
            <person name="Iida K."/>
            <person name="Karnes M."/>
            <person name="Khan S."/>
            <person name="Koesema E."/>
            <person name="Ishida J."/>
            <person name="Jiang P.X."/>
            <person name="Jones T."/>
            <person name="Kawai J."/>
            <person name="Kamiya A."/>
            <person name="Meyers C."/>
            <person name="Nakajima M."/>
            <person name="Narusaka M."/>
            <person name="Seki M."/>
            <person name="Sakurai T."/>
            <person name="Satou M."/>
            <person name="Tamse R."/>
            <person name="Vaysberg M."/>
            <person name="Wallender E.K."/>
            <person name="Wong C."/>
            <person name="Yamamura Y."/>
            <person name="Yuan S."/>
            <person name="Shinozaki K."/>
            <person name="Davis R.W."/>
            <person name="Theologis A."/>
            <person name="Ecker J.R."/>
        </authorList>
    </citation>
    <scope>NUCLEOTIDE SEQUENCE [LARGE SCALE MRNA]</scope>
    <source>
        <strain>cv. Columbia</strain>
    </source>
</reference>
<reference key="5">
    <citation type="journal article" date="2009" name="Plant Physiol.">
        <title>Large-scale Arabidopsis phosphoproteome profiling reveals novel chloroplast kinase substrates and phosphorylation networks.</title>
        <authorList>
            <person name="Reiland S."/>
            <person name="Messerli G."/>
            <person name="Baerenfaller K."/>
            <person name="Gerrits B."/>
            <person name="Endler A."/>
            <person name="Grossmann J."/>
            <person name="Gruissem W."/>
            <person name="Baginsky S."/>
        </authorList>
    </citation>
    <scope>IDENTIFICATION BY MASS SPECTROMETRY [LARGE SCALE ANALYSIS]</scope>
</reference>
<comment type="function">
    <text evidence="1">General coactivator that functions cooperatively with TAFs and mediates functional interactions between upstream activators and the general transcriptional machinery. Binds single-stranded DNA (By similarity).</text>
</comment>
<comment type="interaction">
    <interactant intactId="EBI-2112286">
        <id>O65154</id>
    </interactant>
    <interactant intactId="EBI-3946459">
        <id>Q9C5X0</id>
        <label>IAA34</label>
    </interactant>
    <organismsDiffer>false</organismsDiffer>
    <experiments>3</experiments>
</comment>
<comment type="interaction">
    <interactant intactId="EBI-2112286">
        <id>O65154</id>
    </interactant>
    <interactant intactId="EBI-632187">
        <id>P33077</id>
        <label>IAA4</label>
    </interactant>
    <organismsDiffer>false</organismsDiffer>
    <experiments>3</experiments>
</comment>
<comment type="interaction">
    <interactant intactId="EBI-2112286">
        <id>O65154</id>
    </interactant>
    <interactant intactId="EBI-632216">
        <id>Q38827</id>
        <label>IAA9</label>
    </interactant>
    <organismsDiffer>false</organismsDiffer>
    <experiments>3</experiments>
</comment>
<comment type="interaction">
    <interactant intactId="EBI-2112286">
        <id>O65154</id>
    </interactant>
    <interactant intactId="EBI-2112322">
        <id>O65155</id>
        <label>KELP</label>
    </interactant>
    <organismsDiffer>false</organismsDiffer>
    <experiments>9</experiments>
</comment>
<comment type="subcellular location">
    <subcellularLocation>
        <location evidence="1">Nucleus</location>
    </subcellularLocation>
</comment>
<comment type="alternative products">
    <event type="alternative splicing"/>
    <isoform>
        <id>O65154-1</id>
        <name>1</name>
        <sequence type="displayed"/>
    </isoform>
    <text>A number of isoforms are produced. According to EST sequences.</text>
</comment>
<comment type="similarity">
    <text evidence="3">Belongs to the transcriptional coactivator PC4 family.</text>
</comment>